<feature type="propeptide" id="PRO_0000231667" evidence="2">
    <location>
        <begin position="1"/>
        <end position="2"/>
    </location>
</feature>
<feature type="chain" id="PRO_0000231668" description="Light-harvesting protein B-870 beta chain">
    <location>
        <begin position="3"/>
        <end position="56"/>
    </location>
</feature>
<feature type="propeptide" id="PRO_0000231669">
    <location>
        <begin position="57"/>
        <end position="69"/>
    </location>
</feature>
<feature type="topological domain" description="Cytoplasmic" evidence="1">
    <location>
        <begin position="3"/>
        <end position="22"/>
    </location>
</feature>
<feature type="transmembrane region" description="Helical" evidence="1">
    <location>
        <begin position="23"/>
        <end position="45"/>
    </location>
</feature>
<feature type="topological domain" description="Periplasmic" evidence="1">
    <location>
        <begin position="46"/>
        <end position="56"/>
    </location>
</feature>
<feature type="binding site" description="axial binding residue" evidence="1">
    <location>
        <position position="21"/>
    </location>
    <ligand>
        <name>a bacteriochlorophyll</name>
        <dbReference type="ChEBI" id="CHEBI:38201"/>
    </ligand>
    <ligandPart>
        <name>Mg</name>
        <dbReference type="ChEBI" id="CHEBI:25107"/>
    </ligandPart>
</feature>
<feature type="binding site" description="axial binding residue" evidence="1">
    <location>
        <position position="39"/>
    </location>
    <ligand>
        <name>a bacteriochlorophyll</name>
        <dbReference type="ChEBI" id="CHEBI:38201"/>
    </ligand>
    <ligandPart>
        <name>Mg</name>
        <dbReference type="ChEBI" id="CHEBI:25107"/>
    </ligandPart>
</feature>
<feature type="helix" evidence="5">
    <location>
        <begin position="14"/>
        <end position="45"/>
    </location>
</feature>
<feature type="strand" evidence="4">
    <location>
        <begin position="46"/>
        <end position="49"/>
    </location>
</feature>
<name>LHB_RHORT</name>
<organism>
    <name type="scientific">Rhodospirillum rubrum (strain ATCC 11170 / ATH 1.1.1 / DSM 467 / LMG 4362 / NCIMB 8255 / S1)</name>
    <dbReference type="NCBI Taxonomy" id="269796"/>
    <lineage>
        <taxon>Bacteria</taxon>
        <taxon>Pseudomonadati</taxon>
        <taxon>Pseudomonadota</taxon>
        <taxon>Alphaproteobacteria</taxon>
        <taxon>Rhodospirillales</taxon>
        <taxon>Rhodospirillaceae</taxon>
        <taxon>Rhodospirillum</taxon>
    </lineage>
</organism>
<sequence>MAEVKQESLSGITEGEAKEFHKIFTSSILVFFGVAAFAHLLVWIWRPWVPGPNGYSALETLTQTLTYLS</sequence>
<comment type="function">
    <text>Antenna complexes are light-harvesting systems, which transfer the excitation energy to the reaction centers.</text>
</comment>
<comment type="subunit">
    <text>The core complex is formed by different alpha and beta chains, binding bacteriochlorophyll molecules, and arranged most probably in tetrameric structures disposed around the reaction center. The non-pigmented gamma chains may constitute additional components.</text>
</comment>
<comment type="subcellular location">
    <subcellularLocation>
        <location>Cell inner membrane</location>
        <topology>Single-pass type II membrane protein</topology>
    </subcellularLocation>
</comment>
<comment type="similarity">
    <text evidence="3">Belongs to the antenna complex beta subunit family.</text>
</comment>
<reference key="1">
    <citation type="journal article" date="1986" name="J. Biol. Chem.">
        <title>Molecular cloning and sequence of the B880 holochrome gene from Rhodospirillum rubrum.</title>
        <authorList>
            <person name="Berard J."/>
            <person name="Belanger G."/>
            <person name="Corriveau P."/>
            <person name="Gingras G."/>
        </authorList>
    </citation>
    <scope>NUCLEOTIDE SEQUENCE [GENOMIC DNA]</scope>
</reference>
<reference key="2">
    <citation type="journal article" date="2011" name="Stand. Genomic Sci.">
        <title>Complete genome sequence of Rhodospirillum rubrum type strain (S1).</title>
        <authorList>
            <person name="Munk A.C."/>
            <person name="Copeland A."/>
            <person name="Lucas S."/>
            <person name="Lapidus A."/>
            <person name="Del Rio T.G."/>
            <person name="Barry K."/>
            <person name="Detter J.C."/>
            <person name="Hammon N."/>
            <person name="Israni S."/>
            <person name="Pitluck S."/>
            <person name="Brettin T."/>
            <person name="Bruce D."/>
            <person name="Han C."/>
            <person name="Tapia R."/>
            <person name="Gilna P."/>
            <person name="Schmutz J."/>
            <person name="Larimer F."/>
            <person name="Land M."/>
            <person name="Kyrpides N.C."/>
            <person name="Mavromatis K."/>
            <person name="Richardson P."/>
            <person name="Rohde M."/>
            <person name="Goeker M."/>
            <person name="Klenk H.P."/>
            <person name="Zhang Y."/>
            <person name="Roberts G.P."/>
            <person name="Reslewic S."/>
            <person name="Schwartz D.C."/>
        </authorList>
    </citation>
    <scope>NUCLEOTIDE SEQUENCE [LARGE SCALE GENOMIC DNA]</scope>
    <source>
        <strain>ATCC 11170 / ATH 1.1.1 / DSM 467 / LMG 4362 / NCIMB 8255 / S1</strain>
    </source>
</reference>
<reference key="3">
    <citation type="journal article" date="1984" name="Hoppe-Seyler's Z. Physiol. Chem.">
        <title>The light-harvesting polypeptides of Rhodospirillum rubrum. I. The amino-acid sequence of the second light-harvestng polypeptide B 880-beta (B 870-beta) of Rhodospirillum rubrum S 1 and the carotenoidless mutant G-9+.</title>
        <authorList>
            <person name="Brunisholz R.A."/>
            <person name="Suter F."/>
            <person name="Zuber H."/>
        </authorList>
    </citation>
    <scope>PROTEIN SEQUENCE OF 3-56</scope>
</reference>
<keyword id="KW-0002">3D-structure</keyword>
<keyword id="KW-0042">Antenna complex</keyword>
<keyword id="KW-0076">Bacteriochlorophyll</keyword>
<keyword id="KW-0997">Cell inner membrane</keyword>
<keyword id="KW-1003">Cell membrane</keyword>
<keyword id="KW-0148">Chlorophyll</keyword>
<keyword id="KW-0157">Chromophore</keyword>
<keyword id="KW-0903">Direct protein sequencing</keyword>
<keyword id="KW-0437">Light-harvesting polypeptide</keyword>
<keyword id="KW-0460">Magnesium</keyword>
<keyword id="KW-0472">Membrane</keyword>
<keyword id="KW-0479">Metal-binding</keyword>
<keyword id="KW-1185">Reference proteome</keyword>
<keyword id="KW-0812">Transmembrane</keyword>
<keyword id="KW-1133">Transmembrane helix</keyword>
<accession>Q2RQ23</accession>
<accession>P04125</accession>
<evidence type="ECO:0000255" key="1"/>
<evidence type="ECO:0000269" key="2">
    <source>
    </source>
</evidence>
<evidence type="ECO:0000305" key="3"/>
<evidence type="ECO:0007829" key="4">
    <source>
        <dbReference type="PDB" id="1WRG"/>
    </source>
</evidence>
<evidence type="ECO:0007829" key="5">
    <source>
        <dbReference type="PDB" id="7OY8"/>
    </source>
</evidence>
<proteinExistence type="evidence at protein level"/>
<dbReference type="EMBL" id="M11801">
    <property type="protein sequence ID" value="AAA26461.1"/>
    <property type="molecule type" value="Genomic_DNA"/>
</dbReference>
<dbReference type="EMBL" id="CP000230">
    <property type="protein sequence ID" value="ABC23772.1"/>
    <property type="molecule type" value="Genomic_DNA"/>
</dbReference>
<dbReference type="PIR" id="A24206">
    <property type="entry name" value="A24206"/>
</dbReference>
<dbReference type="RefSeq" id="YP_428059.1">
    <property type="nucleotide sequence ID" value="NC_007643.1"/>
</dbReference>
<dbReference type="PDB" id="1WRG">
    <property type="method" value="NMR"/>
    <property type="chains" value="A=2-56"/>
</dbReference>
<dbReference type="PDB" id="7EQD">
    <property type="method" value="EM"/>
    <property type="resolution" value="2.76 A"/>
    <property type="chains" value="0/2/4/6/8/B/E/G/J/N/P/R/T/V/X/Z=2-56"/>
</dbReference>
<dbReference type="PDB" id="7OY8">
    <property type="method" value="EM"/>
    <property type="resolution" value="2.50 A"/>
    <property type="chains" value="1/3/5/7/9/I/K/O/Q/S/U/W/Y/d/m/n=3-56"/>
</dbReference>
<dbReference type="PDBsum" id="1WRG"/>
<dbReference type="PDBsum" id="7EQD"/>
<dbReference type="PDBsum" id="7OY8"/>
<dbReference type="BMRB" id="Q2RQ23"/>
<dbReference type="EMDB" id="EMD-13110"/>
<dbReference type="EMDB" id="EMD-31258"/>
<dbReference type="SMR" id="Q2RQ23"/>
<dbReference type="STRING" id="269796.Rru_A2977"/>
<dbReference type="EnsemblBacteria" id="ABC23772">
    <property type="protein sequence ID" value="ABC23772"/>
    <property type="gene ID" value="Rru_A2977"/>
</dbReference>
<dbReference type="KEGG" id="rru:Rru_A2977"/>
<dbReference type="PATRIC" id="fig|269796.9.peg.3086"/>
<dbReference type="eggNOG" id="ENOG50333MC">
    <property type="taxonomic scope" value="Bacteria"/>
</dbReference>
<dbReference type="HOGENOM" id="CLU_199082_0_0_5"/>
<dbReference type="PhylomeDB" id="Q2RQ23"/>
<dbReference type="EvolutionaryTrace" id="Q2RQ23"/>
<dbReference type="Proteomes" id="UP000001929">
    <property type="component" value="Chromosome"/>
</dbReference>
<dbReference type="GO" id="GO:0005886">
    <property type="term" value="C:plasma membrane"/>
    <property type="evidence" value="ECO:0007669"/>
    <property type="project" value="UniProtKB-SubCell"/>
</dbReference>
<dbReference type="GO" id="GO:0030077">
    <property type="term" value="C:plasma membrane light-harvesting complex"/>
    <property type="evidence" value="ECO:0007669"/>
    <property type="project" value="InterPro"/>
</dbReference>
<dbReference type="GO" id="GO:0042314">
    <property type="term" value="F:bacteriochlorophyll binding"/>
    <property type="evidence" value="ECO:0007669"/>
    <property type="project" value="UniProtKB-KW"/>
</dbReference>
<dbReference type="GO" id="GO:0045156">
    <property type="term" value="F:electron transporter, transferring electrons within the cyclic electron transport pathway of photosynthesis activity"/>
    <property type="evidence" value="ECO:0007669"/>
    <property type="project" value="InterPro"/>
</dbReference>
<dbReference type="GO" id="GO:0046872">
    <property type="term" value="F:metal ion binding"/>
    <property type="evidence" value="ECO:0007669"/>
    <property type="project" value="UniProtKB-KW"/>
</dbReference>
<dbReference type="GO" id="GO:0019684">
    <property type="term" value="P:photosynthesis, light reaction"/>
    <property type="evidence" value="ECO:0007669"/>
    <property type="project" value="InterPro"/>
</dbReference>
<dbReference type="Gene3D" id="1.20.5.250">
    <property type="match status" value="1"/>
</dbReference>
<dbReference type="InterPro" id="IPR000066">
    <property type="entry name" value="Antenna_a/b"/>
</dbReference>
<dbReference type="InterPro" id="IPR023623">
    <property type="entry name" value="Antenna_beta_CS"/>
</dbReference>
<dbReference type="InterPro" id="IPR023624">
    <property type="entry name" value="Antenna_beta_dom_sf"/>
</dbReference>
<dbReference type="InterPro" id="IPR002362">
    <property type="entry name" value="LHB-1/5"/>
</dbReference>
<dbReference type="InterPro" id="IPR035889">
    <property type="entry name" value="Light-harvesting_complex"/>
</dbReference>
<dbReference type="NCBIfam" id="NF040862">
    <property type="entry name" value="pufB_517_ASD"/>
    <property type="match status" value="1"/>
</dbReference>
<dbReference type="Pfam" id="PF00556">
    <property type="entry name" value="LHC"/>
    <property type="match status" value="1"/>
</dbReference>
<dbReference type="PRINTS" id="PR00674">
    <property type="entry name" value="LIGHTHARVSTB"/>
</dbReference>
<dbReference type="SUPFAM" id="SSF56918">
    <property type="entry name" value="Light-harvesting complex subunits"/>
    <property type="match status" value="1"/>
</dbReference>
<dbReference type="PROSITE" id="PS00969">
    <property type="entry name" value="ANTENNA_COMP_BETA"/>
    <property type="match status" value="1"/>
</dbReference>
<gene>
    <name type="ordered locus">Rru_A2977</name>
</gene>
<protein>
    <recommendedName>
        <fullName>Light-harvesting protein B-870 beta chain</fullName>
    </recommendedName>
    <alternativeName>
        <fullName>Antenna pigment protein beta chain</fullName>
    </alternativeName>
    <alternativeName>
        <fullName>LH-1</fullName>
    </alternativeName>
</protein>